<dbReference type="EC" id="2.7.7.6"/>
<dbReference type="EMBL" id="AJ278248">
    <property type="protein sequence ID" value="CAC17120.1"/>
    <property type="molecule type" value="mRNA"/>
</dbReference>
<dbReference type="EMBL" id="AJ001037">
    <property type="protein sequence ID" value="CAA04491.1"/>
    <property type="molecule type" value="Genomic_DNA"/>
</dbReference>
<dbReference type="EMBL" id="AL391144">
    <property type="protein sequence ID" value="CAC01769.1"/>
    <property type="molecule type" value="Genomic_DNA"/>
</dbReference>
<dbReference type="EMBL" id="CP002688">
    <property type="protein sequence ID" value="AED92193.1"/>
    <property type="molecule type" value="Genomic_DNA"/>
</dbReference>
<dbReference type="PIR" id="T51399">
    <property type="entry name" value="T51399"/>
</dbReference>
<dbReference type="RefSeq" id="NP_197074.1">
    <molecule id="Q9LFV6-1"/>
    <property type="nucleotide sequence ID" value="NM_121574.3"/>
</dbReference>
<dbReference type="SMR" id="Q9LFV6"/>
<dbReference type="BioGRID" id="16700">
    <property type="interactions" value="2"/>
</dbReference>
<dbReference type="FunCoup" id="Q9LFV6">
    <property type="interactions" value="2425"/>
</dbReference>
<dbReference type="STRING" id="3702.Q9LFV6"/>
<dbReference type="iPTMnet" id="Q9LFV6"/>
<dbReference type="PaxDb" id="3702-AT5G15700.2"/>
<dbReference type="ProteomicsDB" id="228240">
    <molecule id="Q9LFV6-1"/>
</dbReference>
<dbReference type="EnsemblPlants" id="AT5G15700.1">
    <molecule id="Q9LFV6-1"/>
    <property type="protein sequence ID" value="AT5G15700.1"/>
    <property type="gene ID" value="AT5G15700"/>
</dbReference>
<dbReference type="GeneID" id="831424"/>
<dbReference type="Gramene" id="AT5G15700.1">
    <molecule id="Q9LFV6-1"/>
    <property type="protein sequence ID" value="AT5G15700.1"/>
    <property type="gene ID" value="AT5G15700"/>
</dbReference>
<dbReference type="KEGG" id="ath:AT5G15700"/>
<dbReference type="Araport" id="AT5G15700"/>
<dbReference type="TAIR" id="AT5G15700"/>
<dbReference type="eggNOG" id="KOG1038">
    <property type="taxonomic scope" value="Eukaryota"/>
</dbReference>
<dbReference type="HOGENOM" id="CLU_003364_4_0_1"/>
<dbReference type="InParanoid" id="Q9LFV6"/>
<dbReference type="OMA" id="KEQDLCR"/>
<dbReference type="PhylomeDB" id="Q9LFV6"/>
<dbReference type="PRO" id="PR:Q9LFV6"/>
<dbReference type="Proteomes" id="UP000006548">
    <property type="component" value="Chromosome 5"/>
</dbReference>
<dbReference type="ExpressionAtlas" id="Q9LFV6">
    <property type="expression patterns" value="baseline and differential"/>
</dbReference>
<dbReference type="GO" id="GO:0009507">
    <property type="term" value="C:chloroplast"/>
    <property type="evidence" value="ECO:0007669"/>
    <property type="project" value="UniProtKB-SubCell"/>
</dbReference>
<dbReference type="GO" id="GO:0000428">
    <property type="term" value="C:DNA-directed RNA polymerase complex"/>
    <property type="evidence" value="ECO:0007669"/>
    <property type="project" value="UniProtKB-KW"/>
</dbReference>
<dbReference type="GO" id="GO:0005739">
    <property type="term" value="C:mitochondrion"/>
    <property type="evidence" value="ECO:0007669"/>
    <property type="project" value="UniProtKB-SubCell"/>
</dbReference>
<dbReference type="GO" id="GO:0003677">
    <property type="term" value="F:DNA binding"/>
    <property type="evidence" value="ECO:0007669"/>
    <property type="project" value="InterPro"/>
</dbReference>
<dbReference type="GO" id="GO:0003899">
    <property type="term" value="F:DNA-directed RNA polymerase activity"/>
    <property type="evidence" value="ECO:0007669"/>
    <property type="project" value="UniProtKB-EC"/>
</dbReference>
<dbReference type="GO" id="GO:0006351">
    <property type="term" value="P:DNA-templated transcription"/>
    <property type="evidence" value="ECO:0007669"/>
    <property type="project" value="InterPro"/>
</dbReference>
<dbReference type="FunFam" id="1.10.1320.10:FF:000001">
    <property type="entry name" value="DNA-directed RNA polymerase"/>
    <property type="match status" value="1"/>
</dbReference>
<dbReference type="FunFam" id="1.10.150.20:FF:000027">
    <property type="entry name" value="DNA-directed RNA polymerase"/>
    <property type="match status" value="1"/>
</dbReference>
<dbReference type="FunFam" id="1.10.287.260:FF:000001">
    <property type="entry name" value="DNA-directed RNA polymerase"/>
    <property type="match status" value="1"/>
</dbReference>
<dbReference type="FunFam" id="1.10.287.280:FF:000001">
    <property type="entry name" value="DNA-directed RNA polymerase"/>
    <property type="match status" value="1"/>
</dbReference>
<dbReference type="Gene3D" id="1.10.287.260">
    <property type="match status" value="1"/>
</dbReference>
<dbReference type="Gene3D" id="1.10.287.280">
    <property type="match status" value="1"/>
</dbReference>
<dbReference type="Gene3D" id="1.10.150.20">
    <property type="entry name" value="5' to 3' exonuclease, C-terminal subdomain"/>
    <property type="match status" value="1"/>
</dbReference>
<dbReference type="Gene3D" id="1.10.1320.10">
    <property type="entry name" value="DNA-directed RNA polymerase, N-terminal domain"/>
    <property type="match status" value="1"/>
</dbReference>
<dbReference type="InterPro" id="IPR024075">
    <property type="entry name" value="DNA-dir_RNA_pol_helix_hairp_sf"/>
</dbReference>
<dbReference type="InterPro" id="IPR046950">
    <property type="entry name" value="DNA-dir_Rpol_C_phage-type"/>
</dbReference>
<dbReference type="InterPro" id="IPR002092">
    <property type="entry name" value="DNA-dir_Rpol_phage-type"/>
</dbReference>
<dbReference type="InterPro" id="IPR043502">
    <property type="entry name" value="DNA/RNA_pol_sf"/>
</dbReference>
<dbReference type="InterPro" id="IPR037159">
    <property type="entry name" value="RNA_POL_N_sf"/>
</dbReference>
<dbReference type="InterPro" id="IPR029262">
    <property type="entry name" value="RPOL_N"/>
</dbReference>
<dbReference type="PANTHER" id="PTHR10102">
    <property type="entry name" value="DNA-DIRECTED RNA POLYMERASE, MITOCHONDRIAL"/>
    <property type="match status" value="1"/>
</dbReference>
<dbReference type="PANTHER" id="PTHR10102:SF0">
    <property type="entry name" value="DNA-DIRECTED RNA POLYMERASE, MITOCHONDRIAL"/>
    <property type="match status" value="1"/>
</dbReference>
<dbReference type="Pfam" id="PF00940">
    <property type="entry name" value="RNA_pol"/>
    <property type="match status" value="1"/>
</dbReference>
<dbReference type="Pfam" id="PF14700">
    <property type="entry name" value="RPOL_N"/>
    <property type="match status" value="1"/>
</dbReference>
<dbReference type="SMART" id="SM01311">
    <property type="entry name" value="RPOL_N"/>
    <property type="match status" value="1"/>
</dbReference>
<dbReference type="SUPFAM" id="SSF56672">
    <property type="entry name" value="DNA/RNA polymerases"/>
    <property type="match status" value="1"/>
</dbReference>
<dbReference type="PROSITE" id="PS00900">
    <property type="entry name" value="RNA_POL_PHAGE_1"/>
    <property type="match status" value="1"/>
</dbReference>
<dbReference type="PROSITE" id="PS00489">
    <property type="entry name" value="RNA_POL_PHAGE_2"/>
    <property type="match status" value="1"/>
</dbReference>
<sequence>MSSAQTPLFLANQTKVFDHLIPLHKPFISSPNPVSQSFPMWRNIAKQAISRSAARLNVSSQTRGLLVSSPESIFSKNLSFRFPVLGSPCHGKGFRCLSGITRREEFSKSERCLSGTLARGYTSVAEEEVLSTDVEEEPEVDELLKEMKKEKKRESHRSWRMKKQDQFGMGRTKFQNLWRRQVKIETEEWERAAAEYMELLTDMCEQKLAPNLPYVKSLFLGWFEPLRDAIAKDQELYRLGKSKATYAHYLDQLPADKISVITMHKLMGHLMTGGDNGCVKVVHAACTVGDAIEQEIRICTFLDKKKKGDDNEESGGVENETSMKEQDKLRKKVNELIKKQKLSAVRKILQSHDYTKPWIADVRAKVGSRLIELLVRTAYIQSPADQQDNDLPDVRPAFVHTFKVAKGSMNSGRKYGVIECDPLVRKGLEKSGRYAVMPYMPMLVPPLKWSGYDKGAYLFLTSYIMKTHGAKQQREALKSAPKGQLQPVFEALDTLGSTKWRVNKRVLTVVDRIWSSGGCVADMVDRSDVPLPEKPDTEDEGILKKWKWEVKSAKKVNSERHSQRCDTELKLSVARKMKDEEAFYYPHNMDFRGRAYPMPPHLNHLGSDLCRGVLEFAEGRPMGISGLRWLKIHLANLYAGGVDKLSLDGRLAFTENHLDDIFDSADRPLEGSRWWLQAEDPFQCLAVCISLTEALRSPSPETVLSHIPIHQDGSCNGLQHYAALGRDTLGAEAVNLVAGEKPADVYSGIATRVLDIMRRDADRDPEVFPEALRARKLLNQVDRKLVKQTVMTSVYGVTYIGARDQIKRRLKERSDFGDEKEVFGAACYAAKVTLAAIDEMFQAARAIMRWFGECAKIIASENETVRWTTPLGLPVVQPYHQMGTKLVKTSLQTLSLQHETDQVIVRRQRTAFPPNFIHSLDGSHMMMTAVACKRAGVCFAGVHDSFWTHACDVDKLNIILREKFVELYSQPILENLLESFEQSFPHLDFPPLPERGDLDLKVVLDSPYFFN</sequence>
<gene>
    <name type="primary">RPOT2</name>
    <name type="ordered locus">At5g15700</name>
    <name type="ORF">F14F8_80</name>
</gene>
<proteinExistence type="evidence at protein level"/>
<organism>
    <name type="scientific">Arabidopsis thaliana</name>
    <name type="common">Mouse-ear cress</name>
    <dbReference type="NCBI Taxonomy" id="3702"/>
    <lineage>
        <taxon>Eukaryota</taxon>
        <taxon>Viridiplantae</taxon>
        <taxon>Streptophyta</taxon>
        <taxon>Embryophyta</taxon>
        <taxon>Tracheophyta</taxon>
        <taxon>Spermatophyta</taxon>
        <taxon>Magnoliopsida</taxon>
        <taxon>eudicotyledons</taxon>
        <taxon>Gunneridae</taxon>
        <taxon>Pentapetalae</taxon>
        <taxon>rosids</taxon>
        <taxon>malvids</taxon>
        <taxon>Brassicales</taxon>
        <taxon>Brassicaceae</taxon>
        <taxon>Camelineae</taxon>
        <taxon>Arabidopsis</taxon>
    </lineage>
</organism>
<protein>
    <recommendedName>
        <fullName>DNA-directed RNA polymerase 2, chloroplastic/mitochondrial</fullName>
        <ecNumber>2.7.7.6</ecNumber>
    </recommendedName>
</protein>
<comment type="function">
    <text>DNA-dependent RNA polymerase catalyzes the transcription of DNA into RNA using the four ribonucleoside triphosphates as substrates.</text>
</comment>
<comment type="catalytic activity">
    <reaction evidence="2 3">
        <text>RNA(n) + a ribonucleoside 5'-triphosphate = RNA(n+1) + diphosphate</text>
        <dbReference type="Rhea" id="RHEA:21248"/>
        <dbReference type="Rhea" id="RHEA-COMP:14527"/>
        <dbReference type="Rhea" id="RHEA-COMP:17342"/>
        <dbReference type="ChEBI" id="CHEBI:33019"/>
        <dbReference type="ChEBI" id="CHEBI:61557"/>
        <dbReference type="ChEBI" id="CHEBI:140395"/>
        <dbReference type="EC" id="2.7.7.6"/>
    </reaction>
</comment>
<comment type="subunit">
    <text evidence="6">Interacts with NIP1 and NIP2.</text>
</comment>
<comment type="subcellular location">
    <subcellularLocation>
        <location evidence="5">Plastid</location>
        <location evidence="5">Chloroplast</location>
    </subcellularLocation>
    <subcellularLocation>
        <location evidence="5">Mitochondrion</location>
    </subcellularLocation>
</comment>
<comment type="alternative products">
    <event type="alternative splicing"/>
    <isoform>
        <id>Q9LFV6-1</id>
        <name>1</name>
        <sequence type="displayed"/>
    </isoform>
    <text>A number of isoforms are produced. According to EST sequences.</text>
</comment>
<comment type="similarity">
    <text evidence="7">Belongs to the phage and mitochondrial RNA polymerase family.</text>
</comment>
<name>RPOT2_ARATH</name>
<evidence type="ECO:0000250" key="1"/>
<evidence type="ECO:0000255" key="2">
    <source>
        <dbReference type="PROSITE-ProRule" id="PRU10031"/>
    </source>
</evidence>
<evidence type="ECO:0000255" key="3">
    <source>
        <dbReference type="PROSITE-ProRule" id="PRU10032"/>
    </source>
</evidence>
<evidence type="ECO:0000256" key="4">
    <source>
        <dbReference type="SAM" id="MobiDB-lite"/>
    </source>
</evidence>
<evidence type="ECO:0000269" key="5">
    <source>
    </source>
</evidence>
<evidence type="ECO:0000269" key="6">
    <source>
    </source>
</evidence>
<evidence type="ECO:0000305" key="7"/>
<accession>Q9LFV6</accession>
<accession>O23644</accession>
<feature type="transit peptide" description="Chloroplast and mitochondrion">
    <location>
        <begin position="1"/>
        <end status="unknown"/>
    </location>
</feature>
<feature type="chain" id="PRO_0000046032" description="DNA-directed RNA polymerase 2, chloroplastic/mitochondrial">
    <location>
        <begin status="unknown"/>
        <end position="1011"/>
    </location>
</feature>
<feature type="region of interest" description="Disordered" evidence="4">
    <location>
        <begin position="307"/>
        <end position="326"/>
    </location>
</feature>
<feature type="active site" evidence="1">
    <location>
        <position position="712"/>
    </location>
</feature>
<feature type="active site" evidence="1">
    <location>
        <position position="787"/>
    </location>
</feature>
<feature type="active site" evidence="1">
    <location>
        <position position="944"/>
    </location>
</feature>
<feature type="sequence conflict" description="In Ref. 2; CAA04491." evidence="7" ref="2">
    <original>K</original>
    <variation>R</variation>
    <location>
        <position position="466"/>
    </location>
</feature>
<feature type="sequence conflict" description="In Ref. 2; CAA04491." evidence="7" ref="2">
    <original>G</original>
    <variation>E</variation>
    <location>
        <position position="748"/>
    </location>
</feature>
<keyword id="KW-0025">Alternative splicing</keyword>
<keyword id="KW-0150">Chloroplast</keyword>
<keyword id="KW-0240">DNA-directed RNA polymerase</keyword>
<keyword id="KW-0496">Mitochondrion</keyword>
<keyword id="KW-0548">Nucleotidyltransferase</keyword>
<keyword id="KW-0934">Plastid</keyword>
<keyword id="KW-1185">Reference proteome</keyword>
<keyword id="KW-0804">Transcription</keyword>
<keyword id="KW-0808">Transferase</keyword>
<keyword id="KW-0809">Transit peptide</keyword>
<reference key="1">
    <citation type="journal article" date="2000" name="EMBO Rep.">
        <title>One RNA polymerase serving two genomes.</title>
        <authorList>
            <person name="Hedtke B."/>
            <person name="Boerner T."/>
            <person name="Weihe A."/>
        </authorList>
    </citation>
    <scope>NUCLEOTIDE SEQUENCE [MRNA]</scope>
    <scope>GENE FAMILY</scope>
    <scope>NOMENCLATURE</scope>
    <scope>SUBCELLULAR LOCATION</scope>
    <source>
        <strain>cv. Columbia</strain>
    </source>
</reference>
<reference key="2">
    <citation type="submission" date="1997-08" db="EMBL/GenBank/DDBJ databases">
        <title>Cloning of three single-subunit RNA polymerases from Arabidopsis thaliana.</title>
        <authorList>
            <person name="Sanchez H."/>
            <person name="Schuster W."/>
        </authorList>
    </citation>
    <scope>NUCLEOTIDE SEQUENCE [GENOMIC DNA]</scope>
</reference>
<reference key="3">
    <citation type="journal article" date="2000" name="Nature">
        <title>Sequence and analysis of chromosome 5 of the plant Arabidopsis thaliana.</title>
        <authorList>
            <person name="Tabata S."/>
            <person name="Kaneko T."/>
            <person name="Nakamura Y."/>
            <person name="Kotani H."/>
            <person name="Kato T."/>
            <person name="Asamizu E."/>
            <person name="Miyajima N."/>
            <person name="Sasamoto S."/>
            <person name="Kimura T."/>
            <person name="Hosouchi T."/>
            <person name="Kawashima K."/>
            <person name="Kohara M."/>
            <person name="Matsumoto M."/>
            <person name="Matsuno A."/>
            <person name="Muraki A."/>
            <person name="Nakayama S."/>
            <person name="Nakazaki N."/>
            <person name="Naruo K."/>
            <person name="Okumura S."/>
            <person name="Shinpo S."/>
            <person name="Takeuchi C."/>
            <person name="Wada T."/>
            <person name="Watanabe A."/>
            <person name="Yamada M."/>
            <person name="Yasuda M."/>
            <person name="Sato S."/>
            <person name="de la Bastide M."/>
            <person name="Huang E."/>
            <person name="Spiegel L."/>
            <person name="Gnoj L."/>
            <person name="O'Shaughnessy A."/>
            <person name="Preston R."/>
            <person name="Habermann K."/>
            <person name="Murray J."/>
            <person name="Johnson D."/>
            <person name="Rohlfing T."/>
            <person name="Nelson J."/>
            <person name="Stoneking T."/>
            <person name="Pepin K."/>
            <person name="Spieth J."/>
            <person name="Sekhon M."/>
            <person name="Armstrong J."/>
            <person name="Becker M."/>
            <person name="Belter E."/>
            <person name="Cordum H."/>
            <person name="Cordes M."/>
            <person name="Courtney L."/>
            <person name="Courtney W."/>
            <person name="Dante M."/>
            <person name="Du H."/>
            <person name="Edwards J."/>
            <person name="Fryman J."/>
            <person name="Haakensen B."/>
            <person name="Lamar E."/>
            <person name="Latreille P."/>
            <person name="Leonard S."/>
            <person name="Meyer R."/>
            <person name="Mulvaney E."/>
            <person name="Ozersky P."/>
            <person name="Riley A."/>
            <person name="Strowmatt C."/>
            <person name="Wagner-McPherson C."/>
            <person name="Wollam A."/>
            <person name="Yoakum M."/>
            <person name="Bell M."/>
            <person name="Dedhia N."/>
            <person name="Parnell L."/>
            <person name="Shah R."/>
            <person name="Rodriguez M."/>
            <person name="Hoon See L."/>
            <person name="Vil D."/>
            <person name="Baker J."/>
            <person name="Kirchoff K."/>
            <person name="Toth K."/>
            <person name="King L."/>
            <person name="Bahret A."/>
            <person name="Miller B."/>
            <person name="Marra M.A."/>
            <person name="Martienssen R."/>
            <person name="McCombie W.R."/>
            <person name="Wilson R.K."/>
            <person name="Murphy G."/>
            <person name="Bancroft I."/>
            <person name="Volckaert G."/>
            <person name="Wambutt R."/>
            <person name="Duesterhoeft A."/>
            <person name="Stiekema W."/>
            <person name="Pohl T."/>
            <person name="Entian K.-D."/>
            <person name="Terryn N."/>
            <person name="Hartley N."/>
            <person name="Bent E."/>
            <person name="Johnson S."/>
            <person name="Langham S.-A."/>
            <person name="McCullagh B."/>
            <person name="Robben J."/>
            <person name="Grymonprez B."/>
            <person name="Zimmermann W."/>
            <person name="Ramsperger U."/>
            <person name="Wedler H."/>
            <person name="Balke K."/>
            <person name="Wedler E."/>
            <person name="Peters S."/>
            <person name="van Staveren M."/>
            <person name="Dirkse W."/>
            <person name="Mooijman P."/>
            <person name="Klein Lankhorst R."/>
            <person name="Weitzenegger T."/>
            <person name="Bothe G."/>
            <person name="Rose M."/>
            <person name="Hauf J."/>
            <person name="Berneiser S."/>
            <person name="Hempel S."/>
            <person name="Feldpausch M."/>
            <person name="Lamberth S."/>
            <person name="Villarroel R."/>
            <person name="Gielen J."/>
            <person name="Ardiles W."/>
            <person name="Bents O."/>
            <person name="Lemcke K."/>
            <person name="Kolesov G."/>
            <person name="Mayer K.F.X."/>
            <person name="Rudd S."/>
            <person name="Schoof H."/>
            <person name="Schueller C."/>
            <person name="Zaccaria P."/>
            <person name="Mewes H.-W."/>
            <person name="Bevan M."/>
            <person name="Fransz P.F."/>
        </authorList>
    </citation>
    <scope>NUCLEOTIDE SEQUENCE [LARGE SCALE GENOMIC DNA]</scope>
    <source>
        <strain>cv. Columbia</strain>
    </source>
</reference>
<reference key="4">
    <citation type="journal article" date="2017" name="Plant J.">
        <title>Araport11: a complete reannotation of the Arabidopsis thaliana reference genome.</title>
        <authorList>
            <person name="Cheng C.Y."/>
            <person name="Krishnakumar V."/>
            <person name="Chan A.P."/>
            <person name="Thibaud-Nissen F."/>
            <person name="Schobel S."/>
            <person name="Town C.D."/>
        </authorList>
    </citation>
    <scope>GENOME REANNOTATION</scope>
    <source>
        <strain>cv. Columbia</strain>
    </source>
</reference>
<reference key="5">
    <citation type="journal article" date="2008" name="Proc. Natl. Acad. Sci. U.S.A.">
        <title>Intraplastidial trafficking of a phage-type RNA polymerase is mediated by a thylakoid RING-H2 protein.</title>
        <authorList>
            <person name="Azevedo J."/>
            <person name="Courtois F."/>
            <person name="Hakimi M.A."/>
            <person name="Demarsy E."/>
            <person name="Lagrange T."/>
            <person name="Alcaraz J.P."/>
            <person name="Jaiswal P."/>
            <person name="Marechal-Drouard L."/>
            <person name="Lerbs-Mache S."/>
        </authorList>
    </citation>
    <scope>INTERACTION WITH NIP1 AND NIP2</scope>
</reference>